<organism>
    <name type="scientific">Mycolicibacterium paratuberculosis (strain ATCC BAA-968 / K-10)</name>
    <name type="common">Mycobacterium paratuberculosis</name>
    <dbReference type="NCBI Taxonomy" id="262316"/>
    <lineage>
        <taxon>Bacteria</taxon>
        <taxon>Bacillati</taxon>
        <taxon>Actinomycetota</taxon>
        <taxon>Actinomycetes</taxon>
        <taxon>Mycobacteriales</taxon>
        <taxon>Mycobacteriaceae</taxon>
        <taxon>Mycobacterium</taxon>
        <taxon>Mycobacterium avium complex (MAC)</taxon>
    </lineage>
</organism>
<dbReference type="EC" id="2.7.7.6" evidence="1"/>
<dbReference type="EMBL" id="AE016958">
    <property type="protein sequence ID" value="AAS03441.1"/>
    <property type="molecule type" value="Genomic_DNA"/>
</dbReference>
<dbReference type="RefSeq" id="WP_003872555.1">
    <property type="nucleotide sequence ID" value="NZ_CP106873.1"/>
</dbReference>
<dbReference type="SMR" id="Q741G7"/>
<dbReference type="STRING" id="262316.MAP_1124"/>
<dbReference type="KEGG" id="mpa:MAP_1124"/>
<dbReference type="PATRIC" id="fig|262316.17.peg.1183"/>
<dbReference type="eggNOG" id="COG1758">
    <property type="taxonomic scope" value="Bacteria"/>
</dbReference>
<dbReference type="HOGENOM" id="CLU_125406_1_1_11"/>
<dbReference type="Proteomes" id="UP000000580">
    <property type="component" value="Chromosome"/>
</dbReference>
<dbReference type="GO" id="GO:0000428">
    <property type="term" value="C:DNA-directed RNA polymerase complex"/>
    <property type="evidence" value="ECO:0007669"/>
    <property type="project" value="UniProtKB-KW"/>
</dbReference>
<dbReference type="GO" id="GO:0003677">
    <property type="term" value="F:DNA binding"/>
    <property type="evidence" value="ECO:0007669"/>
    <property type="project" value="UniProtKB-UniRule"/>
</dbReference>
<dbReference type="GO" id="GO:0003899">
    <property type="term" value="F:DNA-directed RNA polymerase activity"/>
    <property type="evidence" value="ECO:0007669"/>
    <property type="project" value="UniProtKB-UniRule"/>
</dbReference>
<dbReference type="GO" id="GO:0006351">
    <property type="term" value="P:DNA-templated transcription"/>
    <property type="evidence" value="ECO:0007669"/>
    <property type="project" value="UniProtKB-UniRule"/>
</dbReference>
<dbReference type="FunFam" id="3.90.940.10:FF:000002">
    <property type="entry name" value="DNA-directed RNA polymerase subunit omega"/>
    <property type="match status" value="1"/>
</dbReference>
<dbReference type="Gene3D" id="3.90.940.10">
    <property type="match status" value="1"/>
</dbReference>
<dbReference type="HAMAP" id="MF_00366">
    <property type="entry name" value="RNApol_bact_RpoZ"/>
    <property type="match status" value="1"/>
</dbReference>
<dbReference type="InterPro" id="IPR003716">
    <property type="entry name" value="DNA-dir_RNA_pol_omega"/>
</dbReference>
<dbReference type="InterPro" id="IPR006110">
    <property type="entry name" value="Pol_omega/Rpo6/RPB6"/>
</dbReference>
<dbReference type="InterPro" id="IPR036161">
    <property type="entry name" value="RPB6/omega-like_sf"/>
</dbReference>
<dbReference type="NCBIfam" id="TIGR00690">
    <property type="entry name" value="rpoZ"/>
    <property type="match status" value="1"/>
</dbReference>
<dbReference type="PANTHER" id="PTHR34476">
    <property type="entry name" value="DNA-DIRECTED RNA POLYMERASE SUBUNIT OMEGA"/>
    <property type="match status" value="1"/>
</dbReference>
<dbReference type="PANTHER" id="PTHR34476:SF1">
    <property type="entry name" value="DNA-DIRECTED RNA POLYMERASE SUBUNIT OMEGA"/>
    <property type="match status" value="1"/>
</dbReference>
<dbReference type="Pfam" id="PF01192">
    <property type="entry name" value="RNA_pol_Rpb6"/>
    <property type="match status" value="1"/>
</dbReference>
<dbReference type="SMART" id="SM01409">
    <property type="entry name" value="RNA_pol_Rpb6"/>
    <property type="match status" value="1"/>
</dbReference>
<dbReference type="SUPFAM" id="SSF63562">
    <property type="entry name" value="RPB6/omega subunit-like"/>
    <property type="match status" value="1"/>
</dbReference>
<comment type="function">
    <text evidence="1">Promotes RNA polymerase assembly. Latches the N- and C-terminal regions of the beta' subunit thereby facilitating its interaction with the beta and alpha subunits.</text>
</comment>
<comment type="catalytic activity">
    <reaction evidence="1">
        <text>RNA(n) + a ribonucleoside 5'-triphosphate = RNA(n+1) + diphosphate</text>
        <dbReference type="Rhea" id="RHEA:21248"/>
        <dbReference type="Rhea" id="RHEA-COMP:14527"/>
        <dbReference type="Rhea" id="RHEA-COMP:17342"/>
        <dbReference type="ChEBI" id="CHEBI:33019"/>
        <dbReference type="ChEBI" id="CHEBI:61557"/>
        <dbReference type="ChEBI" id="CHEBI:140395"/>
        <dbReference type="EC" id="2.7.7.6"/>
    </reaction>
</comment>
<comment type="subunit">
    <text evidence="1">The RNAP catalytic core consists of 2 alpha, 1 beta, 1 beta' and 1 omega subunit. When a sigma factor is associated with the core the holoenzyme is formed, which can initiate transcription.</text>
</comment>
<comment type="similarity">
    <text evidence="1">Belongs to the RNA polymerase subunit omega family.</text>
</comment>
<evidence type="ECO:0000255" key="1">
    <source>
        <dbReference type="HAMAP-Rule" id="MF_00366"/>
    </source>
</evidence>
<gene>
    <name evidence="1" type="primary">rpoZ</name>
    <name type="ordered locus">MAP_1124</name>
</gene>
<keyword id="KW-0240">DNA-directed RNA polymerase</keyword>
<keyword id="KW-0548">Nucleotidyltransferase</keyword>
<keyword id="KW-1185">Reference proteome</keyword>
<keyword id="KW-0804">Transcription</keyword>
<keyword id="KW-0808">Transferase</keyword>
<reference key="1">
    <citation type="journal article" date="2005" name="Proc. Natl. Acad. Sci. U.S.A.">
        <title>The complete genome sequence of Mycobacterium avium subspecies paratuberculosis.</title>
        <authorList>
            <person name="Li L."/>
            <person name="Bannantine J.P."/>
            <person name="Zhang Q."/>
            <person name="Amonsin A."/>
            <person name="May B.J."/>
            <person name="Alt D."/>
            <person name="Banerji N."/>
            <person name="Kanjilal S."/>
            <person name="Kapur V."/>
        </authorList>
    </citation>
    <scope>NUCLEOTIDE SEQUENCE [LARGE SCALE GENOMIC DNA]</scope>
    <source>
        <strain>ATCC BAA-968 / K-10</strain>
    </source>
</reference>
<proteinExistence type="inferred from homology"/>
<name>RPOZ_MYCPA</name>
<sequence>MTNSQSDAALAAVLDRFDPSAGGPGAYDTPLGITNPPIDELLDRVSSKYALVIYAAKRARQINDYYNQLGEGILEYVGPLVEPGLQEKPLSIALREIHGDLLEHTEGE</sequence>
<protein>
    <recommendedName>
        <fullName evidence="1">DNA-directed RNA polymerase subunit omega</fullName>
        <shortName evidence="1">RNAP omega subunit</shortName>
        <ecNumber evidence="1">2.7.7.6</ecNumber>
    </recommendedName>
    <alternativeName>
        <fullName evidence="1">RNA polymerase omega subunit</fullName>
    </alternativeName>
    <alternativeName>
        <fullName evidence="1">Transcriptase subunit omega</fullName>
    </alternativeName>
</protein>
<feature type="chain" id="PRO_0000237476" description="DNA-directed RNA polymerase subunit omega">
    <location>
        <begin position="1"/>
        <end position="108"/>
    </location>
</feature>
<accession>Q741G7</accession>